<accession>Q1Q7V2</accession>
<protein>
    <recommendedName>
        <fullName evidence="1">Putative membrane protein insertion efficiency factor</fullName>
    </recommendedName>
</protein>
<organism>
    <name type="scientific">Psychrobacter cryohalolentis (strain ATCC BAA-1226 / DSM 17306 / VKM B-2378 / K5)</name>
    <dbReference type="NCBI Taxonomy" id="335284"/>
    <lineage>
        <taxon>Bacteria</taxon>
        <taxon>Pseudomonadati</taxon>
        <taxon>Pseudomonadota</taxon>
        <taxon>Gammaproteobacteria</taxon>
        <taxon>Moraxellales</taxon>
        <taxon>Moraxellaceae</taxon>
        <taxon>Psychrobacter</taxon>
    </lineage>
</organism>
<keyword id="KW-0997">Cell inner membrane</keyword>
<keyword id="KW-1003">Cell membrane</keyword>
<keyword id="KW-0472">Membrane</keyword>
<name>YIDD_PSYCK</name>
<gene>
    <name type="ordered locus">Pcryo_2474</name>
</gene>
<reference key="1">
    <citation type="submission" date="2006-03" db="EMBL/GenBank/DDBJ databases">
        <title>Complete sequence of chromosome of Psychrobacter cryohalolentis K5.</title>
        <authorList>
            <consortium name="US DOE Joint Genome Institute"/>
            <person name="Copeland A."/>
            <person name="Lucas S."/>
            <person name="Lapidus A."/>
            <person name="Barry K."/>
            <person name="Detter J.C."/>
            <person name="Glavina T."/>
            <person name="Hammon N."/>
            <person name="Israni S."/>
            <person name="Dalin E."/>
            <person name="Tice H."/>
            <person name="Pitluck S."/>
            <person name="Brettin T."/>
            <person name="Bruce D."/>
            <person name="Han C."/>
            <person name="Tapia R."/>
            <person name="Sims D.R."/>
            <person name="Gilna P."/>
            <person name="Schmutz J."/>
            <person name="Larimer F."/>
            <person name="Land M."/>
            <person name="Hauser L."/>
            <person name="Kyrpides N."/>
            <person name="Kim E."/>
            <person name="Richardson P."/>
        </authorList>
    </citation>
    <scope>NUCLEOTIDE SEQUENCE [LARGE SCALE GENOMIC DNA]</scope>
    <source>
        <strain>ATCC BAA-1226 / DSM 17306 / VKM B-2378 / K5</strain>
    </source>
</reference>
<dbReference type="EMBL" id="CP000323">
    <property type="protein sequence ID" value="ABE76251.1"/>
    <property type="molecule type" value="Genomic_DNA"/>
</dbReference>
<dbReference type="RefSeq" id="WP_011514772.1">
    <property type="nucleotide sequence ID" value="NC_007969.1"/>
</dbReference>
<dbReference type="STRING" id="335284.Pcryo_2474"/>
<dbReference type="KEGG" id="pcr:Pcryo_2474"/>
<dbReference type="eggNOG" id="COG0759">
    <property type="taxonomic scope" value="Bacteria"/>
</dbReference>
<dbReference type="HOGENOM" id="CLU_144811_4_0_6"/>
<dbReference type="Proteomes" id="UP000002425">
    <property type="component" value="Chromosome"/>
</dbReference>
<dbReference type="GO" id="GO:0005886">
    <property type="term" value="C:plasma membrane"/>
    <property type="evidence" value="ECO:0007669"/>
    <property type="project" value="UniProtKB-SubCell"/>
</dbReference>
<dbReference type="HAMAP" id="MF_00386">
    <property type="entry name" value="UPF0161_YidD"/>
    <property type="match status" value="1"/>
</dbReference>
<dbReference type="InterPro" id="IPR002696">
    <property type="entry name" value="Membr_insert_effic_factor_YidD"/>
</dbReference>
<dbReference type="NCBIfam" id="TIGR00278">
    <property type="entry name" value="membrane protein insertion efficiency factor YidD"/>
    <property type="match status" value="1"/>
</dbReference>
<dbReference type="PANTHER" id="PTHR33383">
    <property type="entry name" value="MEMBRANE PROTEIN INSERTION EFFICIENCY FACTOR-RELATED"/>
    <property type="match status" value="1"/>
</dbReference>
<dbReference type="PANTHER" id="PTHR33383:SF1">
    <property type="entry name" value="MEMBRANE PROTEIN INSERTION EFFICIENCY FACTOR-RELATED"/>
    <property type="match status" value="1"/>
</dbReference>
<dbReference type="Pfam" id="PF01809">
    <property type="entry name" value="YidD"/>
    <property type="match status" value="1"/>
</dbReference>
<dbReference type="SMART" id="SM01234">
    <property type="entry name" value="Haemolytic"/>
    <property type="match status" value="1"/>
</dbReference>
<evidence type="ECO:0000255" key="1">
    <source>
        <dbReference type="HAMAP-Rule" id="MF_00386"/>
    </source>
</evidence>
<sequence length="124" mass="14534">MNLFIKIINKYLYKLIYNFIDFYQKIISPILPARCRYYPTCSNYGKQALAWHGVLNGSLLLLKRISRCHPLGGHGVDFVPLPLASYRYQYLSCNPVAHGQFHGFYVYRDNHGYVTRLNHMMKLT</sequence>
<feature type="chain" id="PRO_0000253148" description="Putative membrane protein insertion efficiency factor">
    <location>
        <begin position="1"/>
        <end position="124"/>
    </location>
</feature>
<comment type="function">
    <text evidence="1">Could be involved in insertion of integral membrane proteins into the membrane.</text>
</comment>
<comment type="subcellular location">
    <subcellularLocation>
        <location evidence="1">Cell inner membrane</location>
        <topology evidence="1">Peripheral membrane protein</topology>
        <orientation evidence="1">Cytoplasmic side</orientation>
    </subcellularLocation>
</comment>
<comment type="similarity">
    <text evidence="1">Belongs to the UPF0161 family.</text>
</comment>
<proteinExistence type="inferred from homology"/>